<keyword id="KW-0010">Activator</keyword>
<keyword id="KW-0175">Coiled coil</keyword>
<keyword id="KW-0539">Nucleus</keyword>
<keyword id="KW-1185">Reference proteome</keyword>
<keyword id="KW-0804">Transcription</keyword>
<keyword id="KW-0805">Transcription regulation</keyword>
<accession>Q6CJA3</accession>
<gene>
    <name type="primary">MED4</name>
    <name type="ordered locus">KLLA0F20185g</name>
</gene>
<name>MED4_KLULA</name>
<feature type="chain" id="PRO_0000302078" description="Mediator of RNA polymerase II transcription subunit 4">
    <location>
        <begin position="1"/>
        <end position="285"/>
    </location>
</feature>
<feature type="region of interest" description="Disordered" evidence="3">
    <location>
        <begin position="1"/>
        <end position="25"/>
    </location>
</feature>
<feature type="region of interest" description="Disordered" evidence="3">
    <location>
        <begin position="206"/>
        <end position="285"/>
    </location>
</feature>
<feature type="coiled-coil region" evidence="2">
    <location>
        <begin position="31"/>
        <end position="115"/>
    </location>
</feature>
<feature type="compositionally biased region" description="Low complexity" evidence="3">
    <location>
        <begin position="1"/>
        <end position="13"/>
    </location>
</feature>
<feature type="compositionally biased region" description="Basic and acidic residues" evidence="3">
    <location>
        <begin position="216"/>
        <end position="250"/>
    </location>
</feature>
<feature type="compositionally biased region" description="Basic and acidic residues" evidence="3">
    <location>
        <begin position="257"/>
        <end position="267"/>
    </location>
</feature>
<feature type="compositionally biased region" description="Acidic residues" evidence="3">
    <location>
        <begin position="268"/>
        <end position="285"/>
    </location>
</feature>
<sequence>MSTPGPVPSSTSVATLPFSAQDKTQEQVSEELQSVGIYQDLERYEETIQQLSKSVDTFKPDLSLIDKVIECDKKLYETLEEFDEYYKIEEELSRLDKEQKNIDNKTREILETLNTCYNSLNELPMLEQVEFEQKVMLKQREKIHSKVVLDYAMKLAKFTRFPPTFDKSMIGPNNFIWPAEDSLRKGMLAMASLKKKELLLDALDEDNVNNDNNTSKIDEMRNTNEDSVDDRFNNKEQVQDATEDTERRGSFEFTANGKEDSETKSEENPDLELDLDLDLFNPDEF</sequence>
<reference key="1">
    <citation type="journal article" date="2004" name="Nature">
        <title>Genome evolution in yeasts.</title>
        <authorList>
            <person name="Dujon B."/>
            <person name="Sherman D."/>
            <person name="Fischer G."/>
            <person name="Durrens P."/>
            <person name="Casaregola S."/>
            <person name="Lafontaine I."/>
            <person name="de Montigny J."/>
            <person name="Marck C."/>
            <person name="Neuveglise C."/>
            <person name="Talla E."/>
            <person name="Goffard N."/>
            <person name="Frangeul L."/>
            <person name="Aigle M."/>
            <person name="Anthouard V."/>
            <person name="Babour A."/>
            <person name="Barbe V."/>
            <person name="Barnay S."/>
            <person name="Blanchin S."/>
            <person name="Beckerich J.-M."/>
            <person name="Beyne E."/>
            <person name="Bleykasten C."/>
            <person name="Boisrame A."/>
            <person name="Boyer J."/>
            <person name="Cattolico L."/>
            <person name="Confanioleri F."/>
            <person name="de Daruvar A."/>
            <person name="Despons L."/>
            <person name="Fabre E."/>
            <person name="Fairhead C."/>
            <person name="Ferry-Dumazet H."/>
            <person name="Groppi A."/>
            <person name="Hantraye F."/>
            <person name="Hennequin C."/>
            <person name="Jauniaux N."/>
            <person name="Joyet P."/>
            <person name="Kachouri R."/>
            <person name="Kerrest A."/>
            <person name="Koszul R."/>
            <person name="Lemaire M."/>
            <person name="Lesur I."/>
            <person name="Ma L."/>
            <person name="Muller H."/>
            <person name="Nicaud J.-M."/>
            <person name="Nikolski M."/>
            <person name="Oztas S."/>
            <person name="Ozier-Kalogeropoulos O."/>
            <person name="Pellenz S."/>
            <person name="Potier S."/>
            <person name="Richard G.-F."/>
            <person name="Straub M.-L."/>
            <person name="Suleau A."/>
            <person name="Swennen D."/>
            <person name="Tekaia F."/>
            <person name="Wesolowski-Louvel M."/>
            <person name="Westhof E."/>
            <person name="Wirth B."/>
            <person name="Zeniou-Meyer M."/>
            <person name="Zivanovic Y."/>
            <person name="Bolotin-Fukuhara M."/>
            <person name="Thierry A."/>
            <person name="Bouchier C."/>
            <person name="Caudron B."/>
            <person name="Scarpelli C."/>
            <person name="Gaillardin C."/>
            <person name="Weissenbach J."/>
            <person name="Wincker P."/>
            <person name="Souciet J.-L."/>
        </authorList>
    </citation>
    <scope>NUCLEOTIDE SEQUENCE [LARGE SCALE GENOMIC DNA]</scope>
    <source>
        <strain>ATCC 8585 / CBS 2359 / DSM 70799 / NBRC 1267 / NRRL Y-1140 / WM37</strain>
    </source>
</reference>
<evidence type="ECO:0000250" key="1"/>
<evidence type="ECO:0000255" key="2"/>
<evidence type="ECO:0000256" key="3">
    <source>
        <dbReference type="SAM" id="MobiDB-lite"/>
    </source>
</evidence>
<evidence type="ECO:0000305" key="4"/>
<dbReference type="EMBL" id="CR382126">
    <property type="protein sequence ID" value="CAG98694.1"/>
    <property type="molecule type" value="Genomic_DNA"/>
</dbReference>
<dbReference type="RefSeq" id="XP_455986.1">
    <property type="nucleotide sequence ID" value="XM_455986.1"/>
</dbReference>
<dbReference type="SMR" id="Q6CJA3"/>
<dbReference type="FunCoup" id="Q6CJA3">
    <property type="interactions" value="299"/>
</dbReference>
<dbReference type="STRING" id="284590.Q6CJA3"/>
<dbReference type="PaxDb" id="284590-Q6CJA3"/>
<dbReference type="KEGG" id="kla:KLLA0_F20185g"/>
<dbReference type="eggNOG" id="ENOG502RXM0">
    <property type="taxonomic scope" value="Eukaryota"/>
</dbReference>
<dbReference type="HOGENOM" id="CLU_071875_0_0_1"/>
<dbReference type="InParanoid" id="Q6CJA3"/>
<dbReference type="OMA" id="PFQIHPN"/>
<dbReference type="Proteomes" id="UP000000598">
    <property type="component" value="Chromosome F"/>
</dbReference>
<dbReference type="GO" id="GO:0070847">
    <property type="term" value="C:core mediator complex"/>
    <property type="evidence" value="ECO:0007669"/>
    <property type="project" value="TreeGrafter"/>
</dbReference>
<dbReference type="GO" id="GO:0016592">
    <property type="term" value="C:mediator complex"/>
    <property type="evidence" value="ECO:0007669"/>
    <property type="project" value="InterPro"/>
</dbReference>
<dbReference type="GO" id="GO:0003712">
    <property type="term" value="F:transcription coregulator activity"/>
    <property type="evidence" value="ECO:0007669"/>
    <property type="project" value="InterPro"/>
</dbReference>
<dbReference type="GO" id="GO:0006357">
    <property type="term" value="P:regulation of transcription by RNA polymerase II"/>
    <property type="evidence" value="ECO:0007669"/>
    <property type="project" value="InterPro"/>
</dbReference>
<dbReference type="InterPro" id="IPR019258">
    <property type="entry name" value="Mediator_Med4"/>
</dbReference>
<dbReference type="PANTHER" id="PTHR13208">
    <property type="entry name" value="MEDIATOR OF RNA POLYMERASE II TRANSCRIPTION SUBUNIT 4"/>
    <property type="match status" value="1"/>
</dbReference>
<dbReference type="PANTHER" id="PTHR13208:SF2">
    <property type="entry name" value="MEDIATOR OF RNA POLYMERASE II TRANSCRIPTION SUBUNIT 4"/>
    <property type="match status" value="1"/>
</dbReference>
<dbReference type="Pfam" id="PF10018">
    <property type="entry name" value="Med4"/>
    <property type="match status" value="1"/>
</dbReference>
<protein>
    <recommendedName>
        <fullName>Mediator of RNA polymerase II transcription subunit 4</fullName>
    </recommendedName>
    <alternativeName>
        <fullName>Mediator complex subunit 4</fullName>
    </alternativeName>
</protein>
<comment type="function">
    <text evidence="1">Component of the Mediator complex, a coactivator involved in the regulated transcription of nearly all RNA polymerase II-dependent genes. Mediator functions as a bridge to convey information from gene-specific regulatory proteins to the basal RNA polymerase II transcription machinery. Mediator is recruited to promoters by direct interactions with regulatory proteins and serves as a scaffold for the assembly of a functional preinitiation complex with RNA polymerase II and the general transcription factors (By similarity).</text>
</comment>
<comment type="subunit">
    <text evidence="1">Component of the Mediator complex.</text>
</comment>
<comment type="subcellular location">
    <subcellularLocation>
        <location evidence="1">Nucleus</location>
    </subcellularLocation>
</comment>
<comment type="similarity">
    <text evidence="4">Belongs to the Mediator complex subunit 4 family.</text>
</comment>
<proteinExistence type="inferred from homology"/>
<organism>
    <name type="scientific">Kluyveromyces lactis (strain ATCC 8585 / CBS 2359 / DSM 70799 / NBRC 1267 / NRRL Y-1140 / WM37)</name>
    <name type="common">Yeast</name>
    <name type="synonym">Candida sphaerica</name>
    <dbReference type="NCBI Taxonomy" id="284590"/>
    <lineage>
        <taxon>Eukaryota</taxon>
        <taxon>Fungi</taxon>
        <taxon>Dikarya</taxon>
        <taxon>Ascomycota</taxon>
        <taxon>Saccharomycotina</taxon>
        <taxon>Saccharomycetes</taxon>
        <taxon>Saccharomycetales</taxon>
        <taxon>Saccharomycetaceae</taxon>
        <taxon>Kluyveromyces</taxon>
    </lineage>
</organism>